<comment type="interaction">
    <interactant intactId="EBI-6150673">
        <id>A5A3E0</id>
    </interactant>
    <interactant intactId="EBI-3904496">
        <id>P00813</id>
        <label>ADA</label>
    </interactant>
    <organismsDiffer>false</organismsDiffer>
    <experiments>2</experiments>
</comment>
<comment type="interaction">
    <interactant intactId="EBI-6150673">
        <id>A5A3E0</id>
    </interactant>
    <interactant intactId="EBI-1223374">
        <id>P02765</id>
        <label>AHSG</label>
    </interactant>
    <organismsDiffer>false</organismsDiffer>
    <experiments>2</experiments>
</comment>
<comment type="interaction">
    <interactant intactId="EBI-6150673">
        <id>A5A3E0</id>
    </interactant>
    <interactant intactId="EBI-2116951">
        <id>O15264</id>
        <label>MAPK13</label>
    </interactant>
    <organismsDiffer>false</organismsDiffer>
    <experiments>2</experiments>
</comment>
<comment type="interaction">
    <interactant intactId="EBI-6150673">
        <id>A5A3E0</id>
    </interactant>
    <interactant intactId="EBI-21511702">
        <id>A2RUC4</id>
        <label>TYW5</label>
    </interactant>
    <organismsDiffer>false</organismsDiffer>
    <experiments>2</experiments>
</comment>
<comment type="interaction">
    <interactant intactId="EBI-6150673">
        <id>A5A3E0</id>
    </interactant>
    <interactant intactId="EBI-2871776">
        <id>P06132</id>
        <label>UROD</label>
    </interactant>
    <organismsDiffer>false</organismsDiffer>
    <experiments>2</experiments>
</comment>
<comment type="subcellular location">
    <subcellularLocation>
        <location evidence="3">Cytoplasm</location>
        <location evidence="3">Cell cortex</location>
    </subcellularLocation>
    <text>Colocalizes with actin filaments.</text>
</comment>
<comment type="tissue specificity">
    <text evidence="3">Expressed in breast cancer cell lines (at protein level).</text>
</comment>
<comment type="miscellaneous">
    <text>Results from the insertion of a beta-actin fragment at the C-terminus in the POTEE paralog gene leading to the formation of a new functional chimeric protein. This insertion occured before the divergence of the Old World monkeys and apes.</text>
</comment>
<comment type="similarity">
    <text evidence="4">In the N-terminal section; belongs to the POTE family.</text>
</comment>
<comment type="similarity">
    <text evidence="4">In the C-terminal section; belongs to the actin family.</text>
</comment>
<keyword id="KW-0040">ANK repeat</keyword>
<keyword id="KW-0175">Coiled coil</keyword>
<keyword id="KW-0963">Cytoplasm</keyword>
<keyword id="KW-1267">Proteomics identification</keyword>
<keyword id="KW-1185">Reference proteome</keyword>
<keyword id="KW-0677">Repeat</keyword>
<reference key="1">
    <citation type="journal article" date="2006" name="Proc. Natl. Acad. Sci. U.S.A.">
        <title>Evolution and expression of chimeric POTE-actin genes in the human genome.</title>
        <authorList>
            <person name="Lee Y."/>
            <person name="Ise T."/>
            <person name="Ha D."/>
            <person name="Saint Fleur A."/>
            <person name="Hahn Y."/>
            <person name="Liu X.-F."/>
            <person name="Nagata S."/>
            <person name="Lee B."/>
            <person name="Bera T.K."/>
            <person name="Pastan I."/>
        </authorList>
    </citation>
    <scope>NUCLEOTIDE SEQUENCE [MRNA]</scope>
    <scope>SUBCELLULAR LOCATION</scope>
    <scope>TISSUE SPECIFICITY</scope>
    <source>
        <tissue>Mammary cancer</tissue>
    </source>
</reference>
<reference key="2">
    <citation type="journal article" date="2005" name="Nature">
        <title>Generation and annotation of the DNA sequences of human chromosomes 2 and 4.</title>
        <authorList>
            <person name="Hillier L.W."/>
            <person name="Graves T.A."/>
            <person name="Fulton R.S."/>
            <person name="Fulton L.A."/>
            <person name="Pepin K.H."/>
            <person name="Minx P."/>
            <person name="Wagner-McPherson C."/>
            <person name="Layman D."/>
            <person name="Wylie K."/>
            <person name="Sekhon M."/>
            <person name="Becker M.C."/>
            <person name="Fewell G.A."/>
            <person name="Delehaunty K.D."/>
            <person name="Miner T.L."/>
            <person name="Nash W.E."/>
            <person name="Kremitzki C."/>
            <person name="Oddy L."/>
            <person name="Du H."/>
            <person name="Sun H."/>
            <person name="Bradshaw-Cordum H."/>
            <person name="Ali J."/>
            <person name="Carter J."/>
            <person name="Cordes M."/>
            <person name="Harris A."/>
            <person name="Isak A."/>
            <person name="van Brunt A."/>
            <person name="Nguyen C."/>
            <person name="Du F."/>
            <person name="Courtney L."/>
            <person name="Kalicki J."/>
            <person name="Ozersky P."/>
            <person name="Abbott S."/>
            <person name="Armstrong J."/>
            <person name="Belter E.A."/>
            <person name="Caruso L."/>
            <person name="Cedroni M."/>
            <person name="Cotton M."/>
            <person name="Davidson T."/>
            <person name="Desai A."/>
            <person name="Elliott G."/>
            <person name="Erb T."/>
            <person name="Fronick C."/>
            <person name="Gaige T."/>
            <person name="Haakenson W."/>
            <person name="Haglund K."/>
            <person name="Holmes A."/>
            <person name="Harkins R."/>
            <person name="Kim K."/>
            <person name="Kruchowski S.S."/>
            <person name="Strong C.M."/>
            <person name="Grewal N."/>
            <person name="Goyea E."/>
            <person name="Hou S."/>
            <person name="Levy A."/>
            <person name="Martinka S."/>
            <person name="Mead K."/>
            <person name="McLellan M.D."/>
            <person name="Meyer R."/>
            <person name="Randall-Maher J."/>
            <person name="Tomlinson C."/>
            <person name="Dauphin-Kohlberg S."/>
            <person name="Kozlowicz-Reilly A."/>
            <person name="Shah N."/>
            <person name="Swearengen-Shahid S."/>
            <person name="Snider J."/>
            <person name="Strong J.T."/>
            <person name="Thompson J."/>
            <person name="Yoakum M."/>
            <person name="Leonard S."/>
            <person name="Pearman C."/>
            <person name="Trani L."/>
            <person name="Radionenko M."/>
            <person name="Waligorski J.E."/>
            <person name="Wang C."/>
            <person name="Rock S.M."/>
            <person name="Tin-Wollam A.-M."/>
            <person name="Maupin R."/>
            <person name="Latreille P."/>
            <person name="Wendl M.C."/>
            <person name="Yang S.-P."/>
            <person name="Pohl C."/>
            <person name="Wallis J.W."/>
            <person name="Spieth J."/>
            <person name="Bieri T.A."/>
            <person name="Berkowicz N."/>
            <person name="Nelson J.O."/>
            <person name="Osborne J."/>
            <person name="Ding L."/>
            <person name="Meyer R."/>
            <person name="Sabo A."/>
            <person name="Shotland Y."/>
            <person name="Sinha P."/>
            <person name="Wohldmann P.E."/>
            <person name="Cook L.L."/>
            <person name="Hickenbotham M.T."/>
            <person name="Eldred J."/>
            <person name="Williams D."/>
            <person name="Jones T.A."/>
            <person name="She X."/>
            <person name="Ciccarelli F.D."/>
            <person name="Izaurralde E."/>
            <person name="Taylor J."/>
            <person name="Schmutz J."/>
            <person name="Myers R.M."/>
            <person name="Cox D.R."/>
            <person name="Huang X."/>
            <person name="McPherson J.D."/>
            <person name="Mardis E.R."/>
            <person name="Clifton S.W."/>
            <person name="Warren W.C."/>
            <person name="Chinwalla A.T."/>
            <person name="Eddy S.R."/>
            <person name="Marra M.A."/>
            <person name="Ovcharenko I."/>
            <person name="Furey T.S."/>
            <person name="Miller W."/>
            <person name="Eichler E.E."/>
            <person name="Bork P."/>
            <person name="Suyama M."/>
            <person name="Torrents D."/>
            <person name="Waterston R.H."/>
            <person name="Wilson R.K."/>
        </authorList>
    </citation>
    <scope>NUCLEOTIDE SEQUENCE [LARGE SCALE GENOMIC DNA]</scope>
</reference>
<proteinExistence type="evidence at protein level"/>
<accession>A5A3E0</accession>
<accession>A6NC34</accession>
<sequence length="1075" mass="121445">MVVEVDSMPAASSVKKPFGLRSKMGKWCCRCFPCCRESGKSNVGTSGDHDDSAMKTLRSKMGKWCRHCFPCCRGSGKSNVGASGDHDDSAMKTLRNKMGKWCCHCFPCCRGSSKSKVGAWGDYDDSAFMEPRYHVRGEDLDKLHRAAWWGKVPRKDLIVMLRDTDVNKQDKQKRTALHLASANGNSEVVKLLLDRRCQLNVLDNKKRTALIKAVQCQEDECALMLLEHGTDPNIPDEYGNTTLHYAIYNEDKLMAKALLLYGADIESKNKHGLTPLLLGVHEQKQQVVKFLIKKKANLNALDRYGRTALILAVCCGSASIVSLLLEQNIDVSSQDLSGQTAREYAVSSHHHVICQLLSDYKEKQMLKISSENSNPEQDLKLTSEEESQRFKGSENSQPEKMSQEPEINKDGDREVEEEMKKHESNNVGLLENLTNGVTAGNGDNGLIPQRKSRTPENQQFPDNESEEYHRICELLSDYKEKQMPKYSSENSNPEQDLKLTSEEESQRLKGSENGQPEKRSQEPEINKDGDRELENFMAIEEMKKHRSTHVGFPENLTNGATAGNGDDGLIPPRKSRTPESQQFPDTENEEYHSDEQNDTQKQFCEEQNTGILHDEILIHEEKQIEVVEKMNSELSLSCKKEKDILHENSTLREEIAMLRLELDTMKHQSQLREKKYLEDIESVKKRNDNLLKALQLNELTMDDDTAVLVIDNGSGMCKAGFAGDDAPRAVFPSIVGRPRQQGMMGGMHQKESYVGKEAQSKRGILTLKYPMEHGIITNWDDMEKIWHHTFYNELRVAPEEHPVLLTEATLNPKANREKMTQIMFETFNTPAMYVAIQAVLSLYTSGRTTGIVMDSGDGVTHTVPIYEGNALPHATLRLDLAGRELPDYLMKILTEHGYRFTTMAEREIVRDIKEKLCYVALDFEQEMATVASSSSLEKSYELPDGQVITIGNERFRCPEALFQPCFLGMESCGIHETTFNSIMKSDVDIRKDLYTNTVLSGGTTMYPGMAHRMQKEIAALAPSMMKIRIIAPPKRKYSVWVGGSILASLSTFQQMWISKQEYDESGPSIVHRKCL</sequence>
<feature type="chain" id="PRO_0000307859" description="POTE ankyrin domain family member F">
    <location>
        <begin position="1"/>
        <end position="1075"/>
    </location>
</feature>
<feature type="repeat" description="ANK 1">
    <location>
        <begin position="172"/>
        <end position="201"/>
    </location>
</feature>
<feature type="repeat" description="ANK 2">
    <location>
        <begin position="205"/>
        <end position="234"/>
    </location>
</feature>
<feature type="repeat" description="ANK 3">
    <location>
        <begin position="238"/>
        <end position="267"/>
    </location>
</feature>
<feature type="repeat" description="ANK 4">
    <location>
        <begin position="271"/>
        <end position="300"/>
    </location>
</feature>
<feature type="repeat" description="ANK 5">
    <location>
        <begin position="304"/>
        <end position="333"/>
    </location>
</feature>
<feature type="region of interest" description="Disordered" evidence="2">
    <location>
        <begin position="369"/>
        <end position="530"/>
    </location>
</feature>
<feature type="region of interest" description="Disordered" evidence="2">
    <location>
        <begin position="544"/>
        <end position="596"/>
    </location>
</feature>
<feature type="region of interest" description="Actin-like">
    <location>
        <begin position="702"/>
        <end position="1075"/>
    </location>
</feature>
<feature type="coiled-coil region" evidence="1">
    <location>
        <begin position="399"/>
        <end position="435"/>
    </location>
</feature>
<feature type="coiled-coil region" evidence="1">
    <location>
        <begin position="642"/>
        <end position="698"/>
    </location>
</feature>
<feature type="compositionally biased region" description="Basic and acidic residues" evidence="2">
    <location>
        <begin position="377"/>
        <end position="392"/>
    </location>
</feature>
<feature type="compositionally biased region" description="Basic and acidic residues" evidence="2">
    <location>
        <begin position="401"/>
        <end position="424"/>
    </location>
</feature>
<feature type="compositionally biased region" description="Basic and acidic residues" evidence="2">
    <location>
        <begin position="466"/>
        <end position="483"/>
    </location>
</feature>
<feature type="compositionally biased region" description="Polar residues" evidence="2">
    <location>
        <begin position="485"/>
        <end position="494"/>
    </location>
</feature>
<feature type="compositionally biased region" description="Basic and acidic residues" evidence="2">
    <location>
        <begin position="495"/>
        <end position="530"/>
    </location>
</feature>
<feature type="sequence conflict" description="In Ref. 1; ABP57734." evidence="4" ref="1">
    <original>E</original>
    <variation>G</variation>
    <location>
        <position position="4"/>
    </location>
</feature>
<feature type="sequence conflict" description="In Ref. 1; ABP57734." evidence="4" ref="1">
    <original>S</original>
    <variation>L</variation>
    <location>
        <position position="387"/>
    </location>
</feature>
<feature type="sequence conflict" description="In Ref. 1; ABP57734." evidence="4" ref="1">
    <original>V</original>
    <variation>A</variation>
    <location>
        <position position="930"/>
    </location>
</feature>
<dbReference type="EMBL" id="EF523384">
    <property type="protein sequence ID" value="ABP57734.1"/>
    <property type="molecule type" value="mRNA"/>
</dbReference>
<dbReference type="EMBL" id="AC018804">
    <property type="status" value="NOT_ANNOTATED_CDS"/>
    <property type="molecule type" value="Genomic_DNA"/>
</dbReference>
<dbReference type="EMBL" id="AC018865">
    <property type="status" value="NOT_ANNOTATED_CDS"/>
    <property type="molecule type" value="Genomic_DNA"/>
</dbReference>
<dbReference type="CCDS" id="CCDS46409.1"/>
<dbReference type="RefSeq" id="NP_001093241.1">
    <property type="nucleotide sequence ID" value="NM_001099771.2"/>
</dbReference>
<dbReference type="RefSeq" id="XP_047301677.1">
    <property type="nucleotide sequence ID" value="XM_047445721.1"/>
</dbReference>
<dbReference type="SMR" id="A5A3E0"/>
<dbReference type="BioGRID" id="608805">
    <property type="interactions" value="316"/>
</dbReference>
<dbReference type="FunCoup" id="A5A3E0">
    <property type="interactions" value="628"/>
</dbReference>
<dbReference type="IntAct" id="A5A3E0">
    <property type="interactions" value="192"/>
</dbReference>
<dbReference type="MINT" id="A5A3E0"/>
<dbReference type="STRING" id="9606.ENSP00000386786"/>
<dbReference type="GlyGen" id="A5A3E0">
    <property type="glycosylation" value="1 site, 1 O-linked glycan (1 site)"/>
</dbReference>
<dbReference type="iPTMnet" id="A5A3E0"/>
<dbReference type="PhosphoSitePlus" id="A5A3E0"/>
<dbReference type="SwissPalm" id="A5A3E0"/>
<dbReference type="BioMuta" id="POTEF"/>
<dbReference type="jPOST" id="A5A3E0"/>
<dbReference type="MassIVE" id="A5A3E0"/>
<dbReference type="PaxDb" id="9606-ENSP00000350052"/>
<dbReference type="PeptideAtlas" id="A5A3E0"/>
<dbReference type="PRIDE" id="A5A3E0"/>
<dbReference type="ProteomicsDB" id="705"/>
<dbReference type="Pumba" id="A5A3E0"/>
<dbReference type="Antibodypedia" id="56072">
    <property type="antibodies" value="120 antibodies from 9 providers"/>
</dbReference>
<dbReference type="DNASU" id="728378"/>
<dbReference type="Ensembl" id="ENST00000409914.7">
    <property type="protein sequence ID" value="ENSP00000386786.2"/>
    <property type="gene ID" value="ENSG00000196604.13"/>
</dbReference>
<dbReference type="GeneID" id="728378"/>
<dbReference type="KEGG" id="hsa:728378"/>
<dbReference type="MANE-Select" id="ENST00000409914.7">
    <property type="protein sequence ID" value="ENSP00000386786.2"/>
    <property type="RefSeq nucleotide sequence ID" value="NM_001099771.2"/>
    <property type="RefSeq protein sequence ID" value="NP_001093241.1"/>
</dbReference>
<dbReference type="UCSC" id="uc010fmh.3">
    <property type="organism name" value="human"/>
</dbReference>
<dbReference type="AGR" id="HGNC:33905"/>
<dbReference type="CTD" id="728378"/>
<dbReference type="DisGeNET" id="728378"/>
<dbReference type="GeneCards" id="POTEF"/>
<dbReference type="HGNC" id="HGNC:33905">
    <property type="gene designation" value="POTEF"/>
</dbReference>
<dbReference type="HPA" id="ENSG00000196604">
    <property type="expression patterns" value="Tissue enriched (testis)"/>
</dbReference>
<dbReference type="neXtProt" id="NX_A5A3E0"/>
<dbReference type="OpenTargets" id="ENSG00000196604"/>
<dbReference type="PharmGKB" id="PA164724818"/>
<dbReference type="VEuPathDB" id="HostDB:ENSG00000196604"/>
<dbReference type="eggNOG" id="KOG0676">
    <property type="taxonomic scope" value="Eukaryota"/>
</dbReference>
<dbReference type="GeneTree" id="ENSGT00940000163068"/>
<dbReference type="HOGENOM" id="CLU_010163_0_0_1"/>
<dbReference type="InParanoid" id="A5A3E0"/>
<dbReference type="OrthoDB" id="9460435at2759"/>
<dbReference type="PAN-GO" id="A5A3E0">
    <property type="GO annotations" value="0 GO annotations based on evolutionary models"/>
</dbReference>
<dbReference type="PhylomeDB" id="A5A3E0"/>
<dbReference type="TreeFam" id="TF354237"/>
<dbReference type="PathwayCommons" id="A5A3E0"/>
<dbReference type="SignaLink" id="A5A3E0"/>
<dbReference type="BioGRID-ORCS" id="728378">
    <property type="hits" value="71 hits in 1044 CRISPR screens"/>
</dbReference>
<dbReference type="GenomeRNAi" id="728378"/>
<dbReference type="Pharos" id="A5A3E0">
    <property type="development level" value="Tbio"/>
</dbReference>
<dbReference type="PRO" id="PR:A5A3E0"/>
<dbReference type="Proteomes" id="UP000005640">
    <property type="component" value="Chromosome 2"/>
</dbReference>
<dbReference type="RNAct" id="A5A3E0">
    <property type="molecule type" value="protein"/>
</dbReference>
<dbReference type="Bgee" id="ENSG00000196604">
    <property type="expression patterns" value="Expressed in primordial germ cell in gonad and 17 other cell types or tissues"/>
</dbReference>
<dbReference type="ExpressionAtlas" id="A5A3E0">
    <property type="expression patterns" value="baseline and differential"/>
</dbReference>
<dbReference type="GO" id="GO:0015629">
    <property type="term" value="C:actin cytoskeleton"/>
    <property type="evidence" value="ECO:0000318"/>
    <property type="project" value="GO_Central"/>
</dbReference>
<dbReference type="GO" id="GO:0005884">
    <property type="term" value="C:actin filament"/>
    <property type="evidence" value="ECO:0000318"/>
    <property type="project" value="GO_Central"/>
</dbReference>
<dbReference type="GO" id="GO:0030424">
    <property type="term" value="C:axon"/>
    <property type="evidence" value="ECO:0000318"/>
    <property type="project" value="GO_Central"/>
</dbReference>
<dbReference type="GO" id="GO:0072562">
    <property type="term" value="C:blood microparticle"/>
    <property type="evidence" value="ECO:0007005"/>
    <property type="project" value="UniProtKB"/>
</dbReference>
<dbReference type="GO" id="GO:0005938">
    <property type="term" value="C:cell cortex"/>
    <property type="evidence" value="ECO:0007669"/>
    <property type="project" value="UniProtKB-SubCell"/>
</dbReference>
<dbReference type="GO" id="GO:0005737">
    <property type="term" value="C:cytoplasm"/>
    <property type="evidence" value="ECO:0000318"/>
    <property type="project" value="GO_Central"/>
</dbReference>
<dbReference type="GO" id="GO:0070062">
    <property type="term" value="C:extracellular exosome"/>
    <property type="evidence" value="ECO:0007005"/>
    <property type="project" value="UniProtKB"/>
</dbReference>
<dbReference type="GO" id="GO:0005615">
    <property type="term" value="C:extracellular space"/>
    <property type="evidence" value="ECO:0007005"/>
    <property type="project" value="UniProtKB"/>
</dbReference>
<dbReference type="GO" id="GO:0016020">
    <property type="term" value="C:membrane"/>
    <property type="evidence" value="ECO:0000318"/>
    <property type="project" value="GO_Central"/>
</dbReference>
<dbReference type="GO" id="GO:0035267">
    <property type="term" value="C:NuA4 histone acetyltransferase complex"/>
    <property type="evidence" value="ECO:0000318"/>
    <property type="project" value="GO_Central"/>
</dbReference>
<dbReference type="GO" id="GO:0045202">
    <property type="term" value="C:synapse"/>
    <property type="evidence" value="ECO:0000318"/>
    <property type="project" value="GO_Central"/>
</dbReference>
<dbReference type="GO" id="GO:0019901">
    <property type="term" value="F:protein kinase binding"/>
    <property type="evidence" value="ECO:0000318"/>
    <property type="project" value="GO_Central"/>
</dbReference>
<dbReference type="GO" id="GO:0098973">
    <property type="term" value="F:structural constituent of postsynaptic actin cytoskeleton"/>
    <property type="evidence" value="ECO:0000318"/>
    <property type="project" value="GO_Central"/>
</dbReference>
<dbReference type="GO" id="GO:0007409">
    <property type="term" value="P:axonogenesis"/>
    <property type="evidence" value="ECO:0000318"/>
    <property type="project" value="GO_Central"/>
</dbReference>
<dbReference type="GO" id="GO:0048870">
    <property type="term" value="P:cell motility"/>
    <property type="evidence" value="ECO:0000318"/>
    <property type="project" value="GO_Central"/>
</dbReference>
<dbReference type="CDD" id="cd10224">
    <property type="entry name" value="ASKHA_NBD_actin"/>
    <property type="match status" value="1"/>
</dbReference>
<dbReference type="FunFam" id="3.30.420.40:FF:000291">
    <property type="entry name" value="Actin, alpha skeletal muscle"/>
    <property type="match status" value="1"/>
</dbReference>
<dbReference type="FunFam" id="3.90.640.10:FF:000047">
    <property type="entry name" value="Actin, alpha skeletal muscle"/>
    <property type="match status" value="1"/>
</dbReference>
<dbReference type="FunFam" id="3.30.420.40:FF:000404">
    <property type="entry name" value="Major actin"/>
    <property type="match status" value="1"/>
</dbReference>
<dbReference type="FunFam" id="1.25.40.20:FF:000581">
    <property type="entry name" value="POTE ankyrin domain family member E"/>
    <property type="match status" value="1"/>
</dbReference>
<dbReference type="FunFam" id="3.30.420.40:FF:000058">
    <property type="entry name" value="Putative actin-related protein 5"/>
    <property type="match status" value="1"/>
</dbReference>
<dbReference type="Gene3D" id="3.30.420.40">
    <property type="match status" value="2"/>
</dbReference>
<dbReference type="Gene3D" id="3.90.640.10">
    <property type="entry name" value="Actin, Chain A, domain 4"/>
    <property type="match status" value="1"/>
</dbReference>
<dbReference type="Gene3D" id="1.25.40.20">
    <property type="entry name" value="Ankyrin repeat-containing domain"/>
    <property type="match status" value="1"/>
</dbReference>
<dbReference type="InterPro" id="IPR004000">
    <property type="entry name" value="Actin"/>
</dbReference>
<dbReference type="InterPro" id="IPR020902">
    <property type="entry name" value="Actin/actin-like_CS"/>
</dbReference>
<dbReference type="InterPro" id="IPR004001">
    <property type="entry name" value="Actin_CS"/>
</dbReference>
<dbReference type="InterPro" id="IPR002110">
    <property type="entry name" value="Ankyrin_rpt"/>
</dbReference>
<dbReference type="InterPro" id="IPR036770">
    <property type="entry name" value="Ankyrin_rpt-contain_sf"/>
</dbReference>
<dbReference type="InterPro" id="IPR043129">
    <property type="entry name" value="ATPase_NBD"/>
</dbReference>
<dbReference type="InterPro" id="IPR039497">
    <property type="entry name" value="CC144C-like_CC_dom"/>
</dbReference>
<dbReference type="PANTHER" id="PTHR11937">
    <property type="entry name" value="ACTIN"/>
    <property type="match status" value="1"/>
</dbReference>
<dbReference type="Pfam" id="PF00022">
    <property type="entry name" value="Actin"/>
    <property type="match status" value="1"/>
</dbReference>
<dbReference type="Pfam" id="PF12796">
    <property type="entry name" value="Ank_2"/>
    <property type="match status" value="2"/>
</dbReference>
<dbReference type="Pfam" id="PF14915">
    <property type="entry name" value="CCDC144C"/>
    <property type="match status" value="1"/>
</dbReference>
<dbReference type="PRINTS" id="PR00190">
    <property type="entry name" value="ACTIN"/>
</dbReference>
<dbReference type="SMART" id="SM00268">
    <property type="entry name" value="ACTIN"/>
    <property type="match status" value="1"/>
</dbReference>
<dbReference type="SMART" id="SM00248">
    <property type="entry name" value="ANK"/>
    <property type="match status" value="6"/>
</dbReference>
<dbReference type="SUPFAM" id="SSF53067">
    <property type="entry name" value="Actin-like ATPase domain"/>
    <property type="match status" value="2"/>
</dbReference>
<dbReference type="SUPFAM" id="SSF48403">
    <property type="entry name" value="Ankyrin repeat"/>
    <property type="match status" value="1"/>
</dbReference>
<dbReference type="PROSITE" id="PS00432">
    <property type="entry name" value="ACTINS_2"/>
    <property type="match status" value="1"/>
</dbReference>
<dbReference type="PROSITE" id="PS01132">
    <property type="entry name" value="ACTINS_ACT_LIKE"/>
    <property type="match status" value="1"/>
</dbReference>
<dbReference type="PROSITE" id="PS50297">
    <property type="entry name" value="ANK_REP_REGION"/>
    <property type="match status" value="1"/>
</dbReference>
<dbReference type="PROSITE" id="PS50088">
    <property type="entry name" value="ANK_REPEAT"/>
    <property type="match status" value="4"/>
</dbReference>
<name>POTEF_HUMAN</name>
<gene>
    <name type="primary">POTEF</name>
    <name type="synonym">A26C1B</name>
</gene>
<evidence type="ECO:0000255" key="1"/>
<evidence type="ECO:0000256" key="2">
    <source>
        <dbReference type="SAM" id="MobiDB-lite"/>
    </source>
</evidence>
<evidence type="ECO:0000269" key="3">
    <source>
    </source>
</evidence>
<evidence type="ECO:0000305" key="4"/>
<protein>
    <recommendedName>
        <fullName>POTE ankyrin domain family member F</fullName>
    </recommendedName>
    <alternativeName>
        <fullName>ANKRD26-like family C member 1B</fullName>
    </alternativeName>
    <alternativeName>
        <fullName>Chimeric POTE-actin protein</fullName>
    </alternativeName>
</protein>
<organism>
    <name type="scientific">Homo sapiens</name>
    <name type="common">Human</name>
    <dbReference type="NCBI Taxonomy" id="9606"/>
    <lineage>
        <taxon>Eukaryota</taxon>
        <taxon>Metazoa</taxon>
        <taxon>Chordata</taxon>
        <taxon>Craniata</taxon>
        <taxon>Vertebrata</taxon>
        <taxon>Euteleostomi</taxon>
        <taxon>Mammalia</taxon>
        <taxon>Eutheria</taxon>
        <taxon>Euarchontoglires</taxon>
        <taxon>Primates</taxon>
        <taxon>Haplorrhini</taxon>
        <taxon>Catarrhini</taxon>
        <taxon>Hominidae</taxon>
        <taxon>Homo</taxon>
    </lineage>
</organism>